<gene>
    <name type="primary">PLAT</name>
</gene>
<sequence length="562" mass="62943">MNAMKRGLCCVLLLCGAVFALPSQEIHARVRRGARSYQVICRDEKTQMIYQQHQSWLRPVLRSNRVEYCWCNSGRAQCHSVPVRSCSEPRCFNGGTCQQALYFSDFVCQCPEGFAGKCCEIDTRATCYEDQGISYRGTWSTAESGAECTNWNSSALAQKPYSGRRPDAIRLGLGNHNYCRNPDRDSKPWCYVFKAGKYSSEFCSTPACSEGNSDCYFGNGLAYRGTHSLTESGASCLLWNSMILIGKVYTAQNPNAQALGLGKHNYCRNPDGDAKPWCHVLKNRRLTWEYCDVPSCSTCGLRQYSQPQFRIKGGLFADIASHPWQAAIFARHRRSPGERFLCGGILISSCWILSAAHCFQERFPPHHLTVILGRTYRVVPGEEEQKFEVEKYIVHKEFDDDTYDNDIALLQLKSDSSRCAQESSVVRTVCLPPADLQLPDWTECELSGYGKHEALSPFYSERLKEAHVRLYPSSRCTSQHLLNRTVADNMLCAGDTRSGGPQANLHDACQGDSGGPLVCLNDGRMTLVGIISWGLGCGEKDVPGVYTKVTNYLDWIHDNMRP</sequence>
<protein>
    <recommendedName>
        <fullName>Tissue-type plasminogen activator</fullName>
        <shortName>t-PA</shortName>
        <shortName>t-plasminogen activator</shortName>
        <shortName>tPA</shortName>
        <ecNumber>3.4.21.68</ecNumber>
    </recommendedName>
    <component>
        <recommendedName>
            <fullName>Tissue-type plasminogen activator chain A</fullName>
        </recommendedName>
    </component>
    <component>
        <recommendedName>
            <fullName>Tissue-type plasminogen activator chain B</fullName>
        </recommendedName>
    </component>
</protein>
<dbReference type="EC" id="3.4.21.68"/>
<dbReference type="EMBL" id="CR859762">
    <property type="protein sequence ID" value="CAH91920.1"/>
    <property type="molecule type" value="mRNA"/>
</dbReference>
<dbReference type="RefSeq" id="NP_001126112.1">
    <property type="nucleotide sequence ID" value="NM_001132640.1"/>
</dbReference>
<dbReference type="SMR" id="Q5R8J0"/>
<dbReference type="FunCoup" id="Q5R8J0">
    <property type="interactions" value="599"/>
</dbReference>
<dbReference type="STRING" id="9601.ENSPPYP00000020802"/>
<dbReference type="MEROPS" id="S01.232"/>
<dbReference type="GlyCosmos" id="Q5R8J0">
    <property type="glycosylation" value="3 sites, No reported glycans"/>
</dbReference>
<dbReference type="GeneID" id="100173068"/>
<dbReference type="KEGG" id="pon:100173068"/>
<dbReference type="CTD" id="5327"/>
<dbReference type="eggNOG" id="KOG3627">
    <property type="taxonomic scope" value="Eukaryota"/>
</dbReference>
<dbReference type="InParanoid" id="Q5R8J0"/>
<dbReference type="OrthoDB" id="6020543at2759"/>
<dbReference type="Proteomes" id="UP000001595">
    <property type="component" value="Unplaced"/>
</dbReference>
<dbReference type="GO" id="GO:0005615">
    <property type="term" value="C:extracellular space"/>
    <property type="evidence" value="ECO:0007669"/>
    <property type="project" value="TreeGrafter"/>
</dbReference>
<dbReference type="GO" id="GO:0004252">
    <property type="term" value="F:serine-type endopeptidase activity"/>
    <property type="evidence" value="ECO:0007669"/>
    <property type="project" value="UniProtKB-EC"/>
</dbReference>
<dbReference type="GO" id="GO:0031639">
    <property type="term" value="P:plasminogen activation"/>
    <property type="evidence" value="ECO:0007669"/>
    <property type="project" value="InterPro"/>
</dbReference>
<dbReference type="GO" id="GO:0048008">
    <property type="term" value="P:platelet-derived growth factor receptor signaling pathway"/>
    <property type="evidence" value="ECO:0007669"/>
    <property type="project" value="TreeGrafter"/>
</dbReference>
<dbReference type="GO" id="GO:0060468">
    <property type="term" value="P:prevention of polyspermy"/>
    <property type="evidence" value="ECO:0000250"/>
    <property type="project" value="UniProtKB"/>
</dbReference>
<dbReference type="GO" id="GO:0014909">
    <property type="term" value="P:smooth muscle cell migration"/>
    <property type="evidence" value="ECO:0007669"/>
    <property type="project" value="TreeGrafter"/>
</dbReference>
<dbReference type="CDD" id="cd00061">
    <property type="entry name" value="FN1"/>
    <property type="match status" value="1"/>
</dbReference>
<dbReference type="CDD" id="cd00108">
    <property type="entry name" value="KR"/>
    <property type="match status" value="2"/>
</dbReference>
<dbReference type="CDD" id="cd00190">
    <property type="entry name" value="Tryp_SPc"/>
    <property type="match status" value="1"/>
</dbReference>
<dbReference type="FunFam" id="2.40.10.10:FF:000054">
    <property type="entry name" value="Complement C1r subcomponent"/>
    <property type="match status" value="1"/>
</dbReference>
<dbReference type="FunFam" id="2.10.70.10:FF:000043">
    <property type="entry name" value="Plasminogen activator"/>
    <property type="match status" value="1"/>
</dbReference>
<dbReference type="FunFam" id="2.10.25.10:FF:000483">
    <property type="entry name" value="Tissue-type plasminogen activator"/>
    <property type="match status" value="1"/>
</dbReference>
<dbReference type="FunFam" id="2.40.10.10:FF:000058">
    <property type="entry name" value="Tissue-type plasminogen activator"/>
    <property type="match status" value="1"/>
</dbReference>
<dbReference type="FunFam" id="2.40.20.10:FF:000001">
    <property type="entry name" value="Urokinase-type plasminogen activator"/>
    <property type="match status" value="2"/>
</dbReference>
<dbReference type="Gene3D" id="2.10.70.10">
    <property type="entry name" value="Complement Module, domain 1"/>
    <property type="match status" value="1"/>
</dbReference>
<dbReference type="Gene3D" id="2.10.25.10">
    <property type="entry name" value="Laminin"/>
    <property type="match status" value="1"/>
</dbReference>
<dbReference type="Gene3D" id="2.40.20.10">
    <property type="entry name" value="Plasminogen Kringle 4"/>
    <property type="match status" value="2"/>
</dbReference>
<dbReference type="Gene3D" id="2.40.10.10">
    <property type="entry name" value="Trypsin-like serine proteases"/>
    <property type="match status" value="2"/>
</dbReference>
<dbReference type="InterPro" id="IPR000742">
    <property type="entry name" value="EGF-like_dom"/>
</dbReference>
<dbReference type="InterPro" id="IPR000083">
    <property type="entry name" value="Fibronectin_type1"/>
</dbReference>
<dbReference type="InterPro" id="IPR000001">
    <property type="entry name" value="Kringle"/>
</dbReference>
<dbReference type="InterPro" id="IPR013806">
    <property type="entry name" value="Kringle-like"/>
</dbReference>
<dbReference type="InterPro" id="IPR018056">
    <property type="entry name" value="Kringle_CS"/>
</dbReference>
<dbReference type="InterPro" id="IPR038178">
    <property type="entry name" value="Kringle_sf"/>
</dbReference>
<dbReference type="InterPro" id="IPR009003">
    <property type="entry name" value="Peptidase_S1_PA"/>
</dbReference>
<dbReference type="InterPro" id="IPR043504">
    <property type="entry name" value="Peptidase_S1_PA_chymotrypsin"/>
</dbReference>
<dbReference type="InterPro" id="IPR001314">
    <property type="entry name" value="Peptidase_S1A"/>
</dbReference>
<dbReference type="InterPro" id="IPR050127">
    <property type="entry name" value="Serine_Proteases_S1"/>
</dbReference>
<dbReference type="InterPro" id="IPR026280">
    <property type="entry name" value="Tissue_plasm_act"/>
</dbReference>
<dbReference type="InterPro" id="IPR001254">
    <property type="entry name" value="Trypsin_dom"/>
</dbReference>
<dbReference type="InterPro" id="IPR018114">
    <property type="entry name" value="TRYPSIN_HIS"/>
</dbReference>
<dbReference type="InterPro" id="IPR033116">
    <property type="entry name" value="TRYPSIN_SER"/>
</dbReference>
<dbReference type="PANTHER" id="PTHR24264:SF42">
    <property type="entry name" value="TISSUE-TYPE PLASMINOGEN ACTIVATOR"/>
    <property type="match status" value="1"/>
</dbReference>
<dbReference type="PANTHER" id="PTHR24264">
    <property type="entry name" value="TRYPSIN-RELATED"/>
    <property type="match status" value="1"/>
</dbReference>
<dbReference type="Pfam" id="PF00008">
    <property type="entry name" value="EGF"/>
    <property type="match status" value="1"/>
</dbReference>
<dbReference type="Pfam" id="PF00039">
    <property type="entry name" value="fn1"/>
    <property type="match status" value="1"/>
</dbReference>
<dbReference type="Pfam" id="PF00051">
    <property type="entry name" value="Kringle"/>
    <property type="match status" value="2"/>
</dbReference>
<dbReference type="Pfam" id="PF00089">
    <property type="entry name" value="Trypsin"/>
    <property type="match status" value="1"/>
</dbReference>
<dbReference type="PIRSF" id="PIRSF001145">
    <property type="entry name" value="Tissue_plasm_act"/>
    <property type="match status" value="1"/>
</dbReference>
<dbReference type="PRINTS" id="PR00722">
    <property type="entry name" value="CHYMOTRYPSIN"/>
</dbReference>
<dbReference type="PRINTS" id="PR00018">
    <property type="entry name" value="KRINGLE"/>
</dbReference>
<dbReference type="SMART" id="SM00058">
    <property type="entry name" value="FN1"/>
    <property type="match status" value="1"/>
</dbReference>
<dbReference type="SMART" id="SM00130">
    <property type="entry name" value="KR"/>
    <property type="match status" value="2"/>
</dbReference>
<dbReference type="SMART" id="SM00020">
    <property type="entry name" value="Tryp_SPc"/>
    <property type="match status" value="1"/>
</dbReference>
<dbReference type="SUPFAM" id="SSF57603">
    <property type="entry name" value="FnI-like domain"/>
    <property type="match status" value="1"/>
</dbReference>
<dbReference type="SUPFAM" id="SSF57440">
    <property type="entry name" value="Kringle-like"/>
    <property type="match status" value="2"/>
</dbReference>
<dbReference type="SUPFAM" id="SSF50494">
    <property type="entry name" value="Trypsin-like serine proteases"/>
    <property type="match status" value="1"/>
</dbReference>
<dbReference type="PROSITE" id="PS00022">
    <property type="entry name" value="EGF_1"/>
    <property type="match status" value="1"/>
</dbReference>
<dbReference type="PROSITE" id="PS01186">
    <property type="entry name" value="EGF_2"/>
    <property type="match status" value="1"/>
</dbReference>
<dbReference type="PROSITE" id="PS50026">
    <property type="entry name" value="EGF_3"/>
    <property type="match status" value="1"/>
</dbReference>
<dbReference type="PROSITE" id="PS01253">
    <property type="entry name" value="FN1_1"/>
    <property type="match status" value="1"/>
</dbReference>
<dbReference type="PROSITE" id="PS51091">
    <property type="entry name" value="FN1_2"/>
    <property type="match status" value="1"/>
</dbReference>
<dbReference type="PROSITE" id="PS00021">
    <property type="entry name" value="KRINGLE_1"/>
    <property type="match status" value="2"/>
</dbReference>
<dbReference type="PROSITE" id="PS50070">
    <property type="entry name" value="KRINGLE_2"/>
    <property type="match status" value="2"/>
</dbReference>
<dbReference type="PROSITE" id="PS50240">
    <property type="entry name" value="TRYPSIN_DOM"/>
    <property type="match status" value="1"/>
</dbReference>
<dbReference type="PROSITE" id="PS00134">
    <property type="entry name" value="TRYPSIN_HIS"/>
    <property type="match status" value="1"/>
</dbReference>
<dbReference type="PROSITE" id="PS00135">
    <property type="entry name" value="TRYPSIN_SER"/>
    <property type="match status" value="1"/>
</dbReference>
<proteinExistence type="evidence at transcript level"/>
<evidence type="ECO:0000250" key="1"/>
<evidence type="ECO:0000250" key="2">
    <source>
        <dbReference type="UniProtKB" id="P00750"/>
    </source>
</evidence>
<evidence type="ECO:0000250" key="3">
    <source>
        <dbReference type="UniProtKB" id="P19637"/>
    </source>
</evidence>
<evidence type="ECO:0000255" key="4"/>
<evidence type="ECO:0000255" key="5">
    <source>
        <dbReference type="PROSITE-ProRule" id="PRU00076"/>
    </source>
</evidence>
<evidence type="ECO:0000255" key="6">
    <source>
        <dbReference type="PROSITE-ProRule" id="PRU00121"/>
    </source>
</evidence>
<evidence type="ECO:0000255" key="7">
    <source>
        <dbReference type="PROSITE-ProRule" id="PRU00274"/>
    </source>
</evidence>
<evidence type="ECO:0000255" key="8">
    <source>
        <dbReference type="PROSITE-ProRule" id="PRU00478"/>
    </source>
</evidence>
<feature type="signal peptide" evidence="4">
    <location>
        <begin position="1"/>
        <end position="20"/>
    </location>
</feature>
<feature type="propeptide" id="PRO_0000285912" evidence="1">
    <location>
        <begin position="21"/>
        <end position="32"/>
    </location>
</feature>
<feature type="propeptide" id="PRO_0000285913" description="Removed by plasmin" evidence="1">
    <location>
        <begin position="33"/>
        <end position="35"/>
    </location>
</feature>
<feature type="chain" id="PRO_0000285914" description="Tissue-type plasminogen activator">
    <location>
        <begin position="36"/>
        <end position="562"/>
    </location>
</feature>
<feature type="chain" id="PRO_0000285915" description="Tissue-type plasminogen activator chain A" evidence="1">
    <location>
        <begin position="36"/>
        <end position="310"/>
    </location>
</feature>
<feature type="chain" id="PRO_0000285916" description="Tissue-type plasminogen activator chain B" evidence="1">
    <location>
        <begin position="311"/>
        <end position="562"/>
    </location>
</feature>
<feature type="domain" description="Fibronectin type-I" evidence="8">
    <location>
        <begin position="39"/>
        <end position="81"/>
    </location>
</feature>
<feature type="domain" description="EGF-like" evidence="5">
    <location>
        <begin position="82"/>
        <end position="120"/>
    </location>
</feature>
<feature type="domain" description="Kringle 1" evidence="6">
    <location>
        <begin position="126"/>
        <end position="208"/>
    </location>
</feature>
<feature type="domain" description="Kringle 2" evidence="6">
    <location>
        <begin position="214"/>
        <end position="296"/>
    </location>
</feature>
<feature type="domain" description="Peptidase S1" evidence="7">
    <location>
        <begin position="311"/>
        <end position="561"/>
    </location>
</feature>
<feature type="region of interest" description="Important for binding to annexin A2" evidence="1">
    <location>
        <begin position="42"/>
        <end position="52"/>
    </location>
</feature>
<feature type="active site" description="Charge relay system" evidence="1">
    <location>
        <position position="357"/>
    </location>
</feature>
<feature type="active site" description="Charge relay system" evidence="1">
    <location>
        <position position="406"/>
    </location>
</feature>
<feature type="active site" description="Charge relay system" evidence="1">
    <location>
        <position position="513"/>
    </location>
</feature>
<feature type="site" description="Important for binding to LRP1" evidence="1">
    <location>
        <position position="102"/>
    </location>
</feature>
<feature type="site" description="Important for single-chain activity" evidence="1">
    <location>
        <position position="464"/>
    </location>
</feature>
<feature type="site" description="Important for single-chain activity" evidence="1">
    <location>
        <position position="512"/>
    </location>
</feature>
<feature type="glycosylation site" description="O-linked (Fuc) threonine" evidence="1">
    <location>
        <position position="96"/>
    </location>
</feature>
<feature type="glycosylation site" description="N-linked (GlcNAc...) asparagine" evidence="4">
    <location>
        <position position="152"/>
    </location>
</feature>
<feature type="glycosylation site" description="N-linked (GlcNAc...) asparagine" evidence="4">
    <location>
        <position position="483"/>
    </location>
</feature>
<feature type="disulfide bond" evidence="1">
    <location>
        <begin position="41"/>
        <end position="71"/>
    </location>
</feature>
<feature type="disulfide bond" evidence="1">
    <location>
        <begin position="69"/>
        <end position="78"/>
    </location>
</feature>
<feature type="disulfide bond" evidence="1">
    <location>
        <begin position="86"/>
        <end position="97"/>
    </location>
</feature>
<feature type="disulfide bond" evidence="1">
    <location>
        <begin position="91"/>
        <end position="108"/>
    </location>
</feature>
<feature type="disulfide bond" evidence="1">
    <location>
        <begin position="110"/>
        <end position="119"/>
    </location>
</feature>
<feature type="disulfide bond" evidence="1">
    <location>
        <begin position="127"/>
        <end position="208"/>
    </location>
</feature>
<feature type="disulfide bond" evidence="1">
    <location>
        <begin position="148"/>
        <end position="190"/>
    </location>
</feature>
<feature type="disulfide bond" evidence="1">
    <location>
        <begin position="179"/>
        <end position="203"/>
    </location>
</feature>
<feature type="disulfide bond" evidence="1">
    <location>
        <begin position="215"/>
        <end position="296"/>
    </location>
</feature>
<feature type="disulfide bond" evidence="1">
    <location>
        <begin position="236"/>
        <end position="278"/>
    </location>
</feature>
<feature type="disulfide bond" evidence="1">
    <location>
        <begin position="267"/>
        <end position="291"/>
    </location>
</feature>
<feature type="disulfide bond" description="Interchain (between A and B chains)" evidence="5 6 7 8">
    <location>
        <begin position="299"/>
        <end position="430"/>
    </location>
</feature>
<feature type="disulfide bond" evidence="1">
    <location>
        <begin position="342"/>
        <end position="358"/>
    </location>
</feature>
<feature type="disulfide bond" evidence="1">
    <location>
        <begin position="350"/>
        <end position="419"/>
    </location>
</feature>
<feature type="disulfide bond" evidence="1">
    <location>
        <begin position="444"/>
        <end position="519"/>
    </location>
</feature>
<feature type="disulfide bond" evidence="1">
    <location>
        <begin position="476"/>
        <end position="492"/>
    </location>
</feature>
<feature type="disulfide bond" evidence="1">
    <location>
        <begin position="509"/>
        <end position="537"/>
    </location>
</feature>
<keyword id="KW-0165">Cleavage on pair of basic residues</keyword>
<keyword id="KW-1015">Disulfide bond</keyword>
<keyword id="KW-0245">EGF-like domain</keyword>
<keyword id="KW-0325">Glycoprotein</keyword>
<keyword id="KW-0378">Hydrolase</keyword>
<keyword id="KW-0420">Kringle</keyword>
<keyword id="KW-0617">Plasminogen activation</keyword>
<keyword id="KW-0645">Protease</keyword>
<keyword id="KW-1185">Reference proteome</keyword>
<keyword id="KW-0677">Repeat</keyword>
<keyword id="KW-0964">Secreted</keyword>
<keyword id="KW-0720">Serine protease</keyword>
<keyword id="KW-0732">Signal</keyword>
<keyword id="KW-0865">Zymogen</keyword>
<organism>
    <name type="scientific">Pongo abelii</name>
    <name type="common">Sumatran orangutan</name>
    <name type="synonym">Pongo pygmaeus abelii</name>
    <dbReference type="NCBI Taxonomy" id="9601"/>
    <lineage>
        <taxon>Eukaryota</taxon>
        <taxon>Metazoa</taxon>
        <taxon>Chordata</taxon>
        <taxon>Craniata</taxon>
        <taxon>Vertebrata</taxon>
        <taxon>Euteleostomi</taxon>
        <taxon>Mammalia</taxon>
        <taxon>Eutheria</taxon>
        <taxon>Euarchontoglires</taxon>
        <taxon>Primates</taxon>
        <taxon>Haplorrhini</taxon>
        <taxon>Catarrhini</taxon>
        <taxon>Hominidae</taxon>
        <taxon>Pongo</taxon>
    </lineage>
</organism>
<accession>Q5R8J0</accession>
<name>TPA_PONAB</name>
<reference key="1">
    <citation type="submission" date="2004-11" db="EMBL/GenBank/DDBJ databases">
        <authorList>
            <consortium name="The German cDNA consortium"/>
        </authorList>
    </citation>
    <scope>NUCLEOTIDE SEQUENCE [LARGE SCALE MRNA]</scope>
    <source>
        <tissue>Kidney</tissue>
    </source>
</reference>
<comment type="function">
    <text evidence="3">Converts the abundant, but inactive, zymogen plasminogen to plasmin by hydrolyzing a single Arg-Val bond in plasminogen. By controlling plasmin-mediated proteolysis, it plays an important role in tissue remodeling and degradation, in cell migration and many other physiopathological events. During oocyte activation, plays a role in cortical granule reaction in the zona reaction, which contributes to the block to polyspermy.</text>
</comment>
<comment type="catalytic activity">
    <reaction>
        <text>Specific cleavage of Arg-|-Val bond in plasminogen to form plasmin.</text>
        <dbReference type="EC" id="3.4.21.68"/>
    </reaction>
</comment>
<comment type="activity regulation">
    <text evidence="2">Inhibited by SERPINA5 (By similarity). Inhibited by SERPINE1 (By similarity).</text>
</comment>
<comment type="subunit">
    <text evidence="1 2">Heterodimer of chain A and chain B held by a disulfide bond. Binds to fibrin with high affinity. This interaction leads to an increase in the catalytic efficiency of the enzyme due to an increase in affinity for plasminogen. Similarly, binding to heparin increases the activation of plasminogen. Binds to annexin A2, cytokeratin-8, fibronectin and laminin. Binds to mannose receptor and the low-density lipoprotein receptor-related protein (LRP1); these proteins are involved in TPA clearance. Binds LRP1B; binding is followed by internalization and degradation. Forms heterodimer with SERPINA5 (By similarity). Interacts with SERPINE1 (By similarity). In complex with SERPINE1, interacts with SORL1 (By similarity).</text>
</comment>
<comment type="subcellular location">
    <subcellularLocation>
        <location evidence="1">Secreted</location>
        <location evidence="1">Extracellular space</location>
    </subcellularLocation>
</comment>
<comment type="domain">
    <text evidence="1">Both FN1 and one of the kringle domains are required for binding to fibrin.</text>
</comment>
<comment type="domain">
    <text evidence="1">Both FN1 and EGF-like domains are important for binding to LRP1.</text>
</comment>
<comment type="domain">
    <text evidence="1">The FN1 domain mediates binding to annexin A2.</text>
</comment>
<comment type="domain">
    <text evidence="1">The second kringle domain is implicated in binding to cytokeratin-8 and to the endothelial cell surface binding site.</text>
</comment>
<comment type="PTM">
    <text evidence="1">The single chain, almost fully active enzyme, can be further processed into a two-chain fully active form by a cleavage after Arg-310 catalyzed by plasmin, tissue kallikrein or factor Xa.</text>
</comment>
<comment type="similarity">
    <text evidence="7">Belongs to the peptidase S1 family.</text>
</comment>